<evidence type="ECO:0000250" key="1">
    <source>
        <dbReference type="UniProtKB" id="Q5JRX3"/>
    </source>
</evidence>
<evidence type="ECO:0000250" key="2">
    <source>
        <dbReference type="UniProtKB" id="Q9LJL3"/>
    </source>
</evidence>
<evidence type="ECO:0000255" key="3">
    <source>
        <dbReference type="PROSITE-ProRule" id="PRU00499"/>
    </source>
</evidence>
<evidence type="ECO:0000269" key="4">
    <source>
    </source>
</evidence>
<evidence type="ECO:0000269" key="5">
    <source>
    </source>
</evidence>
<evidence type="ECO:0000269" key="6">
    <source>
    </source>
</evidence>
<evidence type="ECO:0000269" key="7">
    <source>
    </source>
</evidence>
<evidence type="ECO:0000269" key="8">
    <source>
    </source>
</evidence>
<evidence type="ECO:0000269" key="9">
    <source>
    </source>
</evidence>
<evidence type="ECO:0000269" key="10">
    <source>
    </source>
</evidence>
<evidence type="ECO:0000303" key="11">
    <source>
    </source>
</evidence>
<evidence type="ECO:0000303" key="12">
    <source>
    </source>
</evidence>
<evidence type="ECO:0000305" key="13"/>
<evidence type="ECO:0000305" key="14">
    <source>
    </source>
</evidence>
<evidence type="ECO:0007744" key="15">
    <source>
    </source>
</evidence>
<evidence type="ECO:0007744" key="16">
    <source>
    </source>
</evidence>
<reference key="1">
    <citation type="journal article" date="1997" name="Nature">
        <title>The nucleotide sequence of Saccharomyces cerevisiae chromosome IV.</title>
        <authorList>
            <person name="Jacq C."/>
            <person name="Alt-Moerbe J."/>
            <person name="Andre B."/>
            <person name="Arnold W."/>
            <person name="Bahr A."/>
            <person name="Ballesta J.P.G."/>
            <person name="Bargues M."/>
            <person name="Baron L."/>
            <person name="Becker A."/>
            <person name="Biteau N."/>
            <person name="Bloecker H."/>
            <person name="Blugeon C."/>
            <person name="Boskovic J."/>
            <person name="Brandt P."/>
            <person name="Brueckner M."/>
            <person name="Buitrago M.J."/>
            <person name="Coster F."/>
            <person name="Delaveau T."/>
            <person name="del Rey F."/>
            <person name="Dujon B."/>
            <person name="Eide L.G."/>
            <person name="Garcia-Cantalejo J.M."/>
            <person name="Goffeau A."/>
            <person name="Gomez-Peris A."/>
            <person name="Granotier C."/>
            <person name="Hanemann V."/>
            <person name="Hankeln T."/>
            <person name="Hoheisel J.D."/>
            <person name="Jaeger W."/>
            <person name="Jimenez A."/>
            <person name="Jonniaux J.-L."/>
            <person name="Kraemer C."/>
            <person name="Kuester H."/>
            <person name="Laamanen P."/>
            <person name="Legros Y."/>
            <person name="Louis E.J."/>
            <person name="Moeller-Rieker S."/>
            <person name="Monnet A."/>
            <person name="Moro M."/>
            <person name="Mueller-Auer S."/>
            <person name="Nussbaumer B."/>
            <person name="Paricio N."/>
            <person name="Paulin L."/>
            <person name="Perea J."/>
            <person name="Perez-Alonso M."/>
            <person name="Perez-Ortin J.E."/>
            <person name="Pohl T.M."/>
            <person name="Prydz H."/>
            <person name="Purnelle B."/>
            <person name="Rasmussen S.W."/>
            <person name="Remacha M.A."/>
            <person name="Revuelta J.L."/>
            <person name="Rieger M."/>
            <person name="Salom D."/>
            <person name="Saluz H.P."/>
            <person name="Saiz J.E."/>
            <person name="Saren A.-M."/>
            <person name="Schaefer M."/>
            <person name="Scharfe M."/>
            <person name="Schmidt E.R."/>
            <person name="Schneider C."/>
            <person name="Scholler P."/>
            <person name="Schwarz S."/>
            <person name="Soler-Mira A."/>
            <person name="Urrestarazu L.A."/>
            <person name="Verhasselt P."/>
            <person name="Vissers S."/>
            <person name="Voet M."/>
            <person name="Volckaert G."/>
            <person name="Wagner G."/>
            <person name="Wambutt R."/>
            <person name="Wedler E."/>
            <person name="Wedler H."/>
            <person name="Woelfl S."/>
            <person name="Harris D.E."/>
            <person name="Bowman S."/>
            <person name="Brown D."/>
            <person name="Churcher C.M."/>
            <person name="Connor R."/>
            <person name="Dedman K."/>
            <person name="Gentles S."/>
            <person name="Hamlin N."/>
            <person name="Hunt S."/>
            <person name="Jones L."/>
            <person name="McDonald S."/>
            <person name="Murphy L.D."/>
            <person name="Niblett D."/>
            <person name="Odell C."/>
            <person name="Oliver K."/>
            <person name="Rajandream M.A."/>
            <person name="Richards C."/>
            <person name="Shore L."/>
            <person name="Walsh S.V."/>
            <person name="Barrell B.G."/>
            <person name="Dietrich F.S."/>
            <person name="Mulligan J.T."/>
            <person name="Allen E."/>
            <person name="Araujo R."/>
            <person name="Aviles E."/>
            <person name="Berno A."/>
            <person name="Carpenter J."/>
            <person name="Chen E."/>
            <person name="Cherry J.M."/>
            <person name="Chung E."/>
            <person name="Duncan M."/>
            <person name="Hunicke-Smith S."/>
            <person name="Hyman R.W."/>
            <person name="Komp C."/>
            <person name="Lashkari D."/>
            <person name="Lew H."/>
            <person name="Lin D."/>
            <person name="Mosedale D."/>
            <person name="Nakahara K."/>
            <person name="Namath A."/>
            <person name="Oefner P."/>
            <person name="Oh C."/>
            <person name="Petel F.X."/>
            <person name="Roberts D."/>
            <person name="Schramm S."/>
            <person name="Schroeder M."/>
            <person name="Shogren T."/>
            <person name="Shroff N."/>
            <person name="Winant A."/>
            <person name="Yelton M.A."/>
            <person name="Botstein D."/>
            <person name="Davis R.W."/>
            <person name="Johnston M."/>
            <person name="Andrews S."/>
            <person name="Brinkman R."/>
            <person name="Cooper J."/>
            <person name="Ding H."/>
            <person name="Du Z."/>
            <person name="Favello A."/>
            <person name="Fulton L."/>
            <person name="Gattung S."/>
            <person name="Greco T."/>
            <person name="Hallsworth K."/>
            <person name="Hawkins J."/>
            <person name="Hillier L.W."/>
            <person name="Jier M."/>
            <person name="Johnson D."/>
            <person name="Johnston L."/>
            <person name="Kirsten J."/>
            <person name="Kucaba T."/>
            <person name="Langston Y."/>
            <person name="Latreille P."/>
            <person name="Le T."/>
            <person name="Mardis E."/>
            <person name="Menezes S."/>
            <person name="Miller N."/>
            <person name="Nhan M."/>
            <person name="Pauley A."/>
            <person name="Peluso D."/>
            <person name="Rifkin L."/>
            <person name="Riles L."/>
            <person name="Taich A."/>
            <person name="Trevaskis E."/>
            <person name="Vignati D."/>
            <person name="Wilcox L."/>
            <person name="Wohldman P."/>
            <person name="Vaudin M."/>
            <person name="Wilson R."/>
            <person name="Waterston R."/>
            <person name="Albermann K."/>
            <person name="Hani J."/>
            <person name="Heumann K."/>
            <person name="Kleine K."/>
            <person name="Mewes H.-W."/>
            <person name="Zollner A."/>
            <person name="Zaccaria P."/>
        </authorList>
    </citation>
    <scope>NUCLEOTIDE SEQUENCE [LARGE SCALE GENOMIC DNA]</scope>
    <source>
        <strain>ATCC 204508 / S288c</strain>
    </source>
</reference>
<reference key="2">
    <citation type="journal article" date="2014" name="G3 (Bethesda)">
        <title>The reference genome sequence of Saccharomyces cerevisiae: Then and now.</title>
        <authorList>
            <person name="Engel S.R."/>
            <person name="Dietrich F.S."/>
            <person name="Fisk D.G."/>
            <person name="Binkley G."/>
            <person name="Balakrishnan R."/>
            <person name="Costanzo M.C."/>
            <person name="Dwight S.S."/>
            <person name="Hitz B.C."/>
            <person name="Karra K."/>
            <person name="Nash R.S."/>
            <person name="Weng S."/>
            <person name="Wong E.D."/>
            <person name="Lloyd P."/>
            <person name="Skrzypek M.S."/>
            <person name="Miyasato S.R."/>
            <person name="Simison M."/>
            <person name="Cherry J.M."/>
        </authorList>
    </citation>
    <scope>GENOME REANNOTATION</scope>
    <source>
        <strain>ATCC 204508 / S288c</strain>
    </source>
</reference>
<reference key="3">
    <citation type="journal article" date="1993" name="Gene">
        <title>The Saccharomyces cerevisiae MTS1 gene encodes a putative RNA-binding protein involved in mitochondrial protein targeting.</title>
        <authorList>
            <person name="Ellis E.M."/>
            <person name="Reid G.A."/>
        </authorList>
    </citation>
    <scope>NUCLEOTIDE SEQUENCE [GENOMIC DNA] OF 11-166</scope>
</reference>
<reference key="4">
    <citation type="journal article" date="2022" name="J. Biochem.">
        <title>Purification and characterization of protease M, a yeast mitochondrial nucleotide-stimulated metal protease: Its identification as CYM1 gene product, a mitochondrial presequence peptidase.</title>
        <authorList>
            <person name="Yasuhara T."/>
            <person name="Nakai T."/>
            <person name="Fujiki Y."/>
        </authorList>
    </citation>
    <scope>PROTEIN SEQUENCE OF 17-29</scope>
    <scope>FUNCTION</scope>
    <scope>COFACTOR</scope>
    <scope>ACTIVITY REGULATION</scope>
    <scope>DISRUPTION PHENOTYPE</scope>
    <source>
        <strain>ATCC 24657 / D273-10B</strain>
    </source>
</reference>
<reference key="5">
    <citation type="journal article" date="2003" name="Nature">
        <title>Global analysis of protein localization in budding yeast.</title>
        <authorList>
            <person name="Huh W.-K."/>
            <person name="Falvo J.V."/>
            <person name="Gerke L.C."/>
            <person name="Carroll A.S."/>
            <person name="Howson R.W."/>
            <person name="Weissman J.S."/>
            <person name="O'Shea E.K."/>
        </authorList>
    </citation>
    <scope>SUBCELLULAR LOCATION [LARGE SCALE ANALYSIS]</scope>
</reference>
<reference key="6">
    <citation type="journal article" date="2003" name="Nature">
        <title>Global analysis of protein expression in yeast.</title>
        <authorList>
            <person name="Ghaemmaghami S."/>
            <person name="Huh W.-K."/>
            <person name="Bower K."/>
            <person name="Howson R.W."/>
            <person name="Belle A."/>
            <person name="Dephoure N."/>
            <person name="O'Shea E.K."/>
            <person name="Weissman J.S."/>
        </authorList>
    </citation>
    <scope>LEVEL OF PROTEIN EXPRESSION [LARGE SCALE ANALYSIS]</scope>
</reference>
<reference key="7">
    <citation type="journal article" date="2004" name="Eur. J. Biochem.">
        <title>Enhanced peptide secretion by gene disruption of CYM1, a novel protease in Saccharomyces cerevisiae.</title>
        <authorList>
            <person name="Joenson L."/>
            <person name="Rehfeld J.F."/>
            <person name="Johnsen A.H."/>
        </authorList>
    </citation>
    <scope>SUBCELLULAR LOCATION</scope>
</reference>
<reference key="8">
    <citation type="journal article" date="2005" name="J. Biol. Chem.">
        <title>Role of the novel metallopeptidase Mop112 and saccharolysin for the complete degradation of proteins residing in different subcompartments of mitochondria.</title>
        <authorList>
            <person name="Kambacheld M."/>
            <person name="Augustin S."/>
            <person name="Tatsuta T."/>
            <person name="Muller S."/>
            <person name="Langer T."/>
        </authorList>
    </citation>
    <scope>FUNCTION</scope>
    <scope>SUBCELLULAR LOCATION</scope>
    <scope>MUTAGENESIS OF HIS-84; GLU-87 AND HIS-88</scope>
</reference>
<reference key="9">
    <citation type="journal article" date="2007" name="J. Proteome Res.">
        <title>Large-scale phosphorylation analysis of alpha-factor-arrested Saccharomyces cerevisiae.</title>
        <authorList>
            <person name="Li X."/>
            <person name="Gerber S.A."/>
            <person name="Rudner A.D."/>
            <person name="Beausoleil S.A."/>
            <person name="Haas W."/>
            <person name="Villen J."/>
            <person name="Elias J.E."/>
            <person name="Gygi S.P."/>
        </authorList>
    </citation>
    <scope>PHOSPHORYLATION [LARGE SCALE ANALYSIS] AT SER-920</scope>
    <scope>IDENTIFICATION BY MASS SPECTROMETRY [LARGE SCALE ANALYSIS]</scope>
    <source>
        <strain>ADR376</strain>
    </source>
</reference>
<reference key="10">
    <citation type="journal article" date="2008" name="Mol. Cell. Proteomics">
        <title>A multidimensional chromatography technology for in-depth phosphoproteome analysis.</title>
        <authorList>
            <person name="Albuquerque C.P."/>
            <person name="Smolka M.B."/>
            <person name="Payne S.H."/>
            <person name="Bafna V."/>
            <person name="Eng J."/>
            <person name="Zhou H."/>
        </authorList>
    </citation>
    <scope>PHOSPHORYLATION [LARGE SCALE ANALYSIS] AT SER-920</scope>
    <scope>IDENTIFICATION BY MASS SPECTROMETRY [LARGE SCALE ANALYSIS]</scope>
</reference>
<reference key="11">
    <citation type="journal article" date="2011" name="J. Mol. Biol.">
        <title>Targeting capacity and conservation of PreP homologues localization in mitochondria of different species.</title>
        <authorList>
            <person name="Alikhani N."/>
            <person name="Berglund A.K."/>
            <person name="Engmann T."/>
            <person name="Spaanning E."/>
            <person name="Voegtle F.N."/>
            <person name="Pavlov P."/>
            <person name="Meisinger C."/>
            <person name="Langer T."/>
            <person name="Glaser E."/>
        </authorList>
    </citation>
    <scope>SUBCELLULAR LOCATION</scope>
</reference>
<reference key="12">
    <citation type="journal article" date="2014" name="Cell Metab.">
        <title>Amyloid-beta peptide induces mitochondrial dysfunction by inhibition of preprotein maturation.</title>
        <authorList>
            <person name="Mossmann D."/>
            <person name="Voegtle F.N."/>
            <person name="Taskin A.A."/>
            <person name="Teixeira P.F."/>
            <person name="Ring J."/>
            <person name="Burkhart J.M."/>
            <person name="Burger N."/>
            <person name="Pinho C.M."/>
            <person name="Tadic J."/>
            <person name="Loreth D."/>
            <person name="Graff C."/>
            <person name="Metzger F."/>
            <person name="Sickmann A."/>
            <person name="Kretz O."/>
            <person name="Wiedemann N."/>
            <person name="Zahedi R.P."/>
            <person name="Madeo F."/>
            <person name="Glaser E."/>
            <person name="Meisinger C."/>
        </authorList>
    </citation>
    <scope>FUNCTION</scope>
    <scope>DISRUPTION PHENOTYPE</scope>
    <scope>MUTAGENESIS OF HIS-84; GLU-87 AND HIS-88</scope>
</reference>
<keyword id="KW-0903">Direct protein sequencing</keyword>
<keyword id="KW-0378">Hydrolase</keyword>
<keyword id="KW-0479">Metal-binding</keyword>
<keyword id="KW-0482">Metalloprotease</keyword>
<keyword id="KW-0496">Mitochondrion</keyword>
<keyword id="KW-0597">Phosphoprotein</keyword>
<keyword id="KW-0645">Protease</keyword>
<keyword id="KW-1185">Reference proteome</keyword>
<keyword id="KW-0809">Transit peptide</keyword>
<keyword id="KW-0862">Zinc</keyword>
<gene>
    <name evidence="11" type="primary">CYM1</name>
    <name evidence="12" type="synonym">MOP112</name>
    <name type="ordered locus">YDR430C</name>
    <name type="ORF">D9461.18</name>
</gene>
<dbReference type="EC" id="3.4.24.-"/>
<dbReference type="EMBL" id="X70951">
    <property type="protein sequence ID" value="CAA50290.1"/>
    <property type="molecule type" value="Genomic_DNA"/>
</dbReference>
<dbReference type="EMBL" id="U33007">
    <property type="protein sequence ID" value="AAB64877.1"/>
    <property type="status" value="ALT_FRAME"/>
    <property type="molecule type" value="Genomic_DNA"/>
</dbReference>
<dbReference type="EMBL" id="BK006938">
    <property type="protein sequence ID" value="DAA12269.1"/>
    <property type="molecule type" value="Genomic_DNA"/>
</dbReference>
<dbReference type="PIR" id="S69711">
    <property type="entry name" value="S69711"/>
</dbReference>
<dbReference type="RefSeq" id="NP_010718.1">
    <property type="nucleotide sequence ID" value="NM_001180738.1"/>
</dbReference>
<dbReference type="SMR" id="P32898"/>
<dbReference type="BioGRID" id="32488">
    <property type="interactions" value="119"/>
</dbReference>
<dbReference type="DIP" id="DIP-6735N"/>
<dbReference type="FunCoup" id="P32898">
    <property type="interactions" value="793"/>
</dbReference>
<dbReference type="IntAct" id="P32898">
    <property type="interactions" value="35"/>
</dbReference>
<dbReference type="STRING" id="4932.YDR430C"/>
<dbReference type="MEROPS" id="M16.013"/>
<dbReference type="GlyGen" id="P32898">
    <property type="glycosylation" value="1 site"/>
</dbReference>
<dbReference type="iPTMnet" id="P32898"/>
<dbReference type="PaxDb" id="4932-YDR430C"/>
<dbReference type="PeptideAtlas" id="P32898"/>
<dbReference type="EnsemblFungi" id="YDR430C_mRNA">
    <property type="protein sequence ID" value="YDR430C"/>
    <property type="gene ID" value="YDR430C"/>
</dbReference>
<dbReference type="GeneID" id="852041"/>
<dbReference type="KEGG" id="sce:YDR430C"/>
<dbReference type="AGR" id="SGD:S000002838"/>
<dbReference type="SGD" id="S000002838">
    <property type="gene designation" value="CYM1"/>
</dbReference>
<dbReference type="VEuPathDB" id="FungiDB:YDR430C"/>
<dbReference type="eggNOG" id="KOG2019">
    <property type="taxonomic scope" value="Eukaryota"/>
</dbReference>
<dbReference type="GeneTree" id="ENSGT00390000018381"/>
<dbReference type="HOGENOM" id="CLU_009165_0_0_1"/>
<dbReference type="InParanoid" id="P32898"/>
<dbReference type="OMA" id="FPFQVHY"/>
<dbReference type="OrthoDB" id="10250783at2759"/>
<dbReference type="BioCyc" id="YEAST:G3O-29969-MONOMER"/>
<dbReference type="Reactome" id="R-SCE-1268020">
    <property type="pathway name" value="Mitochondrial protein import"/>
</dbReference>
<dbReference type="BioGRID-ORCS" id="852041">
    <property type="hits" value="0 hits in 10 CRISPR screens"/>
</dbReference>
<dbReference type="CD-CODE" id="E03F929F">
    <property type="entry name" value="Stress granule"/>
</dbReference>
<dbReference type="PRO" id="PR:P32898"/>
<dbReference type="Proteomes" id="UP000002311">
    <property type="component" value="Chromosome IV"/>
</dbReference>
<dbReference type="RNAct" id="P32898">
    <property type="molecule type" value="protein"/>
</dbReference>
<dbReference type="GO" id="GO:0005758">
    <property type="term" value="C:mitochondrial intermembrane space"/>
    <property type="evidence" value="ECO:0000314"/>
    <property type="project" value="SGD"/>
</dbReference>
<dbReference type="GO" id="GO:0005759">
    <property type="term" value="C:mitochondrial matrix"/>
    <property type="evidence" value="ECO:0000314"/>
    <property type="project" value="UniProtKB"/>
</dbReference>
<dbReference type="GO" id="GO:0005739">
    <property type="term" value="C:mitochondrion"/>
    <property type="evidence" value="ECO:0000314"/>
    <property type="project" value="SGD"/>
</dbReference>
<dbReference type="GO" id="GO:0004176">
    <property type="term" value="F:ATP-dependent peptidase activity"/>
    <property type="evidence" value="ECO:0000314"/>
    <property type="project" value="UniProtKB"/>
</dbReference>
<dbReference type="GO" id="GO:0004222">
    <property type="term" value="F:metalloendopeptidase activity"/>
    <property type="evidence" value="ECO:0000314"/>
    <property type="project" value="SGD"/>
</dbReference>
<dbReference type="GO" id="GO:0008270">
    <property type="term" value="F:zinc ion binding"/>
    <property type="evidence" value="ECO:0000314"/>
    <property type="project" value="UniProtKB"/>
</dbReference>
<dbReference type="GO" id="GO:0034982">
    <property type="term" value="P:mitochondrial protein processing"/>
    <property type="evidence" value="ECO:0000316"/>
    <property type="project" value="SGD"/>
</dbReference>
<dbReference type="GO" id="GO:0016485">
    <property type="term" value="P:protein processing"/>
    <property type="evidence" value="ECO:0000314"/>
    <property type="project" value="UniProtKB"/>
</dbReference>
<dbReference type="GO" id="GO:0051603">
    <property type="term" value="P:proteolysis involved in protein catabolic process"/>
    <property type="evidence" value="ECO:0000315"/>
    <property type="project" value="SGD"/>
</dbReference>
<dbReference type="FunFam" id="3.30.830.10:FF:000013">
    <property type="entry name" value="Mitochondrial presequence protease"/>
    <property type="match status" value="1"/>
</dbReference>
<dbReference type="FunFam" id="3.30.830.10:FF:000009">
    <property type="entry name" value="Presequence protease, mitochondrial"/>
    <property type="match status" value="1"/>
</dbReference>
<dbReference type="FunFam" id="3.30.830.10:FF:000011">
    <property type="entry name" value="Presequence protease, mitochondrial"/>
    <property type="match status" value="1"/>
</dbReference>
<dbReference type="Gene3D" id="3.30.830.10">
    <property type="entry name" value="Metalloenzyme, LuxS/M16 peptidase-like"/>
    <property type="match status" value="4"/>
</dbReference>
<dbReference type="InterPro" id="IPR011249">
    <property type="entry name" value="Metalloenz_LuxS/M16"/>
</dbReference>
<dbReference type="InterPro" id="IPR011765">
    <property type="entry name" value="Pept_M16_N"/>
</dbReference>
<dbReference type="InterPro" id="IPR007863">
    <property type="entry name" value="Peptidase_M16_C"/>
</dbReference>
<dbReference type="InterPro" id="IPR013578">
    <property type="entry name" value="Peptidase_M16C_assoc"/>
</dbReference>
<dbReference type="InterPro" id="IPR055130">
    <property type="entry name" value="PreP_C"/>
</dbReference>
<dbReference type="PANTHER" id="PTHR43016">
    <property type="entry name" value="PRESEQUENCE PROTEASE"/>
    <property type="match status" value="1"/>
</dbReference>
<dbReference type="PANTHER" id="PTHR43016:SF13">
    <property type="entry name" value="PRESEQUENCE PROTEASE, MITOCHONDRIAL"/>
    <property type="match status" value="1"/>
</dbReference>
<dbReference type="Pfam" id="PF08367">
    <property type="entry name" value="M16C_assoc"/>
    <property type="match status" value="1"/>
</dbReference>
<dbReference type="Pfam" id="PF00675">
    <property type="entry name" value="Peptidase_M16"/>
    <property type="match status" value="1"/>
</dbReference>
<dbReference type="Pfam" id="PF05193">
    <property type="entry name" value="Peptidase_M16_C"/>
    <property type="match status" value="1"/>
</dbReference>
<dbReference type="Pfam" id="PF22516">
    <property type="entry name" value="PreP_C"/>
    <property type="match status" value="1"/>
</dbReference>
<dbReference type="SMART" id="SM01264">
    <property type="entry name" value="M16C_associated"/>
    <property type="match status" value="1"/>
</dbReference>
<dbReference type="SUPFAM" id="SSF63411">
    <property type="entry name" value="LuxS/MPP-like metallohydrolase"/>
    <property type="match status" value="4"/>
</dbReference>
<feature type="transit peptide" description="Mitochondrion" evidence="10">
    <location>
        <begin position="1"/>
        <end position="16"/>
    </location>
</feature>
<feature type="chain" id="PRO_0000178012" description="Presequence protease, mitochondrial">
    <location>
        <begin position="17"/>
        <end position="989"/>
    </location>
</feature>
<feature type="active site" description="Proton acceptor" evidence="1">
    <location>
        <position position="87"/>
    </location>
</feature>
<feature type="active site" evidence="2">
    <location>
        <position position="160"/>
    </location>
</feature>
<feature type="binding site" evidence="1">
    <location>
        <position position="84"/>
    </location>
    <ligand>
        <name>Zn(2+)</name>
        <dbReference type="ChEBI" id="CHEBI:29105"/>
        <note>catalytic</note>
    </ligand>
</feature>
<feature type="binding site" evidence="1">
    <location>
        <position position="88"/>
    </location>
    <ligand>
        <name>Zn(2+)</name>
        <dbReference type="ChEBI" id="CHEBI:29105"/>
        <note>catalytic</note>
    </ligand>
</feature>
<feature type="binding site" evidence="1">
    <location>
        <position position="185"/>
    </location>
    <ligand>
        <name>Zn(2+)</name>
        <dbReference type="ChEBI" id="CHEBI:29105"/>
        <note>catalytic</note>
    </ligand>
</feature>
<feature type="binding site" evidence="3">
    <location>
        <begin position="972"/>
        <end position="979"/>
    </location>
    <ligand>
        <name>ATP</name>
        <dbReference type="ChEBI" id="CHEBI:30616"/>
    </ligand>
</feature>
<feature type="modified residue" description="Phosphoserine" evidence="15 16">
    <location>
        <position position="920"/>
    </location>
</feature>
<feature type="mutagenesis site" description="Loss of function." evidence="7 9">
    <original>H</original>
    <variation>Y</variation>
    <location>
        <position position="84"/>
    </location>
</feature>
<feature type="mutagenesis site" description="Loss of function." evidence="7 9">
    <original>E</original>
    <variation>Q</variation>
    <location>
        <position position="87"/>
    </location>
</feature>
<feature type="mutagenesis site" description="Loss of function." evidence="7 9">
    <original>H</original>
    <variation>Y</variation>
    <location>
        <position position="88"/>
    </location>
</feature>
<sequence>MLRFQRFASSYAQAQAVRKYPVGGIFHGYEVRRILPVPELRLTAVDLVHSQTGAEHLHIDRDDKNNVFSIAFKTNPPDSTGVPHILEHTTLCGSVKYPVRDPFFKMLNKSLANFMNAMTGPDYTFFPFSTTNPQDFANLRGVYLDSTLNPLLKQEDFDQEGWRLEHKNITDPESNIVFKGVVYNEMKGQISNANYYFWSKFQQSIYPSLNNSGGDPMKITDLRYGDLLDFHHKNYHPSNAKTFTYGNLPLVDTLKQLNEQFSGYGKRARKDKLLMPIDLKKDIDVKLLGQIDTMLPPEKQTKASMTWICGAPQDTYDTFLLKVLGNLLMDGHSSVMYQKLIESGIGLEFSVNSGVEPTTAVNLLTVGIQGVSDIEIFKDTVNNIFQNLLETEHPFDRKRIDAIIEQLELSKKDQKADFGLQLLYSILPGWTNKIDPFESLLFEDVLQRFRGDLETKGDTLFQDLIRKYIVHKPCFTFSIQGSEEFSKSLDDEEQTRLREKITALDEQDKKNIFKRGILLQEKQNEKEDLSCLPTLQIKDIPRAGDKYSIEQKNNTMSRITDTNGITYVRGKRLLNDIIPFELFPYLPLFAESLTNLGTTTESFSEIEDQIKLHTGGISTHVEVTSDPNTTEPRLIFGFDGWSLNSKTDHIFEFWSKILLETDFHKNSDKLKVLIRLLASSNTSSVADAGHAFARGYSAAHYRSSGAINETLNGIEQLQFINRLHSLLDNEETFQREVVDKLTELQKYIVDTNNMNFFITSDSDVQAKTVESQISKFMERLPHGSCLPNGPKTSDYPLIGSKCKHTLIKFPFQVHYTSQALLGVPYTHKDGSALQVMSNMLTFKHLHREVREKGGAYGGGASYSALAGIFSFYSYRDPQPLKSLETFKNSGRYILNDAKWGVTDLDEAKLTIFQQVDAPKSPKGEGVTYFMSGVTDDMKQARREQLLDVSLLDVHRVAEKYLLNKEGVSTVIGPGIEGKTVSPNWEVKEL</sequence>
<proteinExistence type="evidence at protein level"/>
<comment type="function">
    <text evidence="7 9 10">Degrades mitochondrial transit peptides after their cleavage in the intermembrane space or in the matrix, and presequence peptides; clearance of these peptides is required to keep the presequence processing machinery running (PubMed:15772085, PubMed:25176146). Preferentially cleaves the N-terminal side of paired basic amino acid residues (PubMed:35997162). Also degrades other unstructured peptides (PubMed:25176146). May function as an ATP-dependent peptidase as opposed to a metalloendopeptidase (PubMed:35997162).</text>
</comment>
<comment type="cofactor">
    <cofactor evidence="14">
        <name>Zn(2+)</name>
        <dbReference type="ChEBI" id="CHEBI:29105"/>
    </cofactor>
    <text evidence="1">Binds 1 zinc ion per subunit.</text>
</comment>
<comment type="activity regulation">
    <text evidence="10">Activated by nucleotides, including ATP, GTP, CTP, UTP, and ADP (PubMed:35997162). Activated by copper, manganese, calcium and magnesium ions; copper and manganese restore activity following inactivation by EDTA (ethylenediaminetetraacetic acid) (PubMed:35997162). Inhibited by metal chelators including EDTA, EGTA (ethylene glycol bis(2-aminoethyl)tetraacetic acid), and 1,10-phenanthroline (PubMed:35997162). Inhibited by copper, zinc, and iron ions (PubMed:35997162). Also inhibited by dithiothreitol p-mercuribenzenesulfonic acid, N-ethylmaleimide, protoporphyrin, hemin, protamine and triarginine (PubMed:35997162).</text>
</comment>
<comment type="subunit">
    <text evidence="1">Monomer and homodimer; homodimerization is induced by binding of the substrate.</text>
</comment>
<comment type="subcellular location">
    <subcellularLocation>
        <location evidence="4 6 7">Mitochondrion intermembrane space</location>
    </subcellularLocation>
    <subcellularLocation>
        <location evidence="8">Mitochondrion matrix</location>
    </subcellularLocation>
</comment>
<comment type="disruption phenotype">
    <text evidence="9 10">Decreases processing of mitochondrial precursor proteins (PubMed:25176146). Impairs mitochondrial function; increases levels of reactive oxygen species (ROS) in cells, impairs oxygen consumption and decreases the membrane potential (PubMed:25176146). Simultaneous disruption of the mitochondrial-processing peptidase subunit MAS1 or the mitochondrial peptidase OCT1 results in synthetic lethality in respiratory conditions (PubMed:25176146). Decreases processing and activity of SOD2 (PubMed:35997162).</text>
</comment>
<comment type="miscellaneous">
    <text evidence="5">Present with 6140 molecules/cell in log phase SD medium.</text>
</comment>
<comment type="similarity">
    <text evidence="13">Belongs to the peptidase M16 family. PreP subfamily.</text>
</comment>
<comment type="sequence caution" evidence="13">
    <conflict type="frameshift">
        <sequence resource="EMBL-CDS" id="AAB64877"/>
    </conflict>
</comment>
<accession>P32898</accession>
<accession>D6VT59</accession>
<accession>Q04068</accession>
<protein>
    <recommendedName>
        <fullName>Presequence protease, mitochondrial</fullName>
        <shortName evidence="13">PreP</shortName>
        <ecNumber>3.4.24.-</ecNumber>
    </recommendedName>
    <alternativeName>
        <fullName evidence="12">Metalloprotease of 112 kDa</fullName>
    </alternativeName>
    <alternativeName>
        <fullName evidence="12">Pitrilysin metalloproteinase</fullName>
    </alternativeName>
    <alternativeName>
        <fullName evidence="13">Protease M</fullName>
    </alternativeName>
</protein>
<organism>
    <name type="scientific">Saccharomyces cerevisiae (strain ATCC 204508 / S288c)</name>
    <name type="common">Baker's yeast</name>
    <dbReference type="NCBI Taxonomy" id="559292"/>
    <lineage>
        <taxon>Eukaryota</taxon>
        <taxon>Fungi</taxon>
        <taxon>Dikarya</taxon>
        <taxon>Ascomycota</taxon>
        <taxon>Saccharomycotina</taxon>
        <taxon>Saccharomycetes</taxon>
        <taxon>Saccharomycetales</taxon>
        <taxon>Saccharomycetaceae</taxon>
        <taxon>Saccharomyces</taxon>
    </lineage>
</organism>
<name>PREP_YEAST</name>